<protein>
    <recommendedName>
        <fullName evidence="1">Large ribosomal subunit protein uL14c</fullName>
    </recommendedName>
    <alternativeName>
        <fullName evidence="2">50S ribosomal protein L14, chloroplastic</fullName>
    </alternativeName>
</protein>
<geneLocation type="chloroplast"/>
<comment type="function">
    <text evidence="1">Binds to 23S rRNA.</text>
</comment>
<comment type="subunit">
    <text evidence="1">Part of the 50S ribosomal subunit.</text>
</comment>
<comment type="subcellular location">
    <subcellularLocation>
        <location>Plastid</location>
        <location>Chloroplast</location>
    </subcellularLocation>
</comment>
<comment type="similarity">
    <text evidence="1">Belongs to the universal ribosomal protein uL14 family.</text>
</comment>
<dbReference type="EMBL" id="DQ422812">
    <property type="protein sequence ID" value="ABD62228.2"/>
    <property type="molecule type" value="Genomic_DNA"/>
</dbReference>
<dbReference type="RefSeq" id="YP_001019087.1">
    <property type="nucleotide sequence ID" value="NC_008822.1"/>
</dbReference>
<dbReference type="SMR" id="Q19VB2"/>
<dbReference type="GeneID" id="4783213"/>
<dbReference type="GO" id="GO:0009507">
    <property type="term" value="C:chloroplast"/>
    <property type="evidence" value="ECO:0007669"/>
    <property type="project" value="UniProtKB-SubCell"/>
</dbReference>
<dbReference type="GO" id="GO:0022625">
    <property type="term" value="C:cytosolic large ribosomal subunit"/>
    <property type="evidence" value="ECO:0007669"/>
    <property type="project" value="TreeGrafter"/>
</dbReference>
<dbReference type="GO" id="GO:0070180">
    <property type="term" value="F:large ribosomal subunit rRNA binding"/>
    <property type="evidence" value="ECO:0007669"/>
    <property type="project" value="TreeGrafter"/>
</dbReference>
<dbReference type="GO" id="GO:0003735">
    <property type="term" value="F:structural constituent of ribosome"/>
    <property type="evidence" value="ECO:0007669"/>
    <property type="project" value="InterPro"/>
</dbReference>
<dbReference type="GO" id="GO:0006412">
    <property type="term" value="P:translation"/>
    <property type="evidence" value="ECO:0007669"/>
    <property type="project" value="UniProtKB-UniRule"/>
</dbReference>
<dbReference type="CDD" id="cd00337">
    <property type="entry name" value="Ribosomal_uL14"/>
    <property type="match status" value="1"/>
</dbReference>
<dbReference type="FunFam" id="2.40.150.20:FF:000001">
    <property type="entry name" value="50S ribosomal protein L14"/>
    <property type="match status" value="1"/>
</dbReference>
<dbReference type="Gene3D" id="2.40.150.20">
    <property type="entry name" value="Ribosomal protein L14"/>
    <property type="match status" value="1"/>
</dbReference>
<dbReference type="HAMAP" id="MF_01367">
    <property type="entry name" value="Ribosomal_uL14"/>
    <property type="match status" value="1"/>
</dbReference>
<dbReference type="InterPro" id="IPR000218">
    <property type="entry name" value="Ribosomal_uL14"/>
</dbReference>
<dbReference type="InterPro" id="IPR005745">
    <property type="entry name" value="Ribosomal_uL14_bac-type"/>
</dbReference>
<dbReference type="InterPro" id="IPR019972">
    <property type="entry name" value="Ribosomal_uL14_CS"/>
</dbReference>
<dbReference type="InterPro" id="IPR036853">
    <property type="entry name" value="Ribosomal_uL14_sf"/>
</dbReference>
<dbReference type="NCBIfam" id="TIGR01067">
    <property type="entry name" value="rplN_bact"/>
    <property type="match status" value="1"/>
</dbReference>
<dbReference type="PANTHER" id="PTHR11761">
    <property type="entry name" value="50S/60S RIBOSOMAL PROTEIN L14/L23"/>
    <property type="match status" value="1"/>
</dbReference>
<dbReference type="PANTHER" id="PTHR11761:SF3">
    <property type="entry name" value="LARGE RIBOSOMAL SUBUNIT PROTEIN UL14M"/>
    <property type="match status" value="1"/>
</dbReference>
<dbReference type="Pfam" id="PF00238">
    <property type="entry name" value="Ribosomal_L14"/>
    <property type="match status" value="1"/>
</dbReference>
<dbReference type="SMART" id="SM01374">
    <property type="entry name" value="Ribosomal_L14"/>
    <property type="match status" value="1"/>
</dbReference>
<dbReference type="SUPFAM" id="SSF50193">
    <property type="entry name" value="Ribosomal protein L14"/>
    <property type="match status" value="1"/>
</dbReference>
<dbReference type="PROSITE" id="PS00049">
    <property type="entry name" value="RIBOSOMAL_L14"/>
    <property type="match status" value="1"/>
</dbReference>
<accession>Q19VB2</accession>
<name>RK14_CHLAT</name>
<feature type="chain" id="PRO_0000355868" description="Large ribosomal subunit protein uL14c">
    <location>
        <begin position="1"/>
        <end position="122"/>
    </location>
</feature>
<keyword id="KW-0150">Chloroplast</keyword>
<keyword id="KW-0934">Plastid</keyword>
<keyword id="KW-0687">Ribonucleoprotein</keyword>
<keyword id="KW-0689">Ribosomal protein</keyword>
<keyword id="KW-0694">RNA-binding</keyword>
<keyword id="KW-0699">rRNA-binding</keyword>
<proteinExistence type="inferred from homology"/>
<evidence type="ECO:0000255" key="1">
    <source>
        <dbReference type="HAMAP-Rule" id="MF_01367"/>
    </source>
</evidence>
<evidence type="ECO:0000305" key="2"/>
<organism>
    <name type="scientific">Chlorokybus atmophyticus</name>
    <name type="common">Soil alga</name>
    <dbReference type="NCBI Taxonomy" id="3144"/>
    <lineage>
        <taxon>Eukaryota</taxon>
        <taxon>Viridiplantae</taxon>
        <taxon>Streptophyta</taxon>
        <taxon>Chlorokybophyceae</taxon>
        <taxon>Chlorokybales</taxon>
        <taxon>Chlorokybaceae</taxon>
        <taxon>Chlorokybus</taxon>
    </lineage>
</organism>
<sequence length="122" mass="13511">MIQSQTYLNVADNSGARKIMCIRVLGGSQRQYATIGDVIIAVVKDSVPNMALKRSEVVRAVVVRTRKGLRRDNGMTIRFDDNAAVVINKEGNPRGTRVFGPVARELRDRNFTKIVSLAPEVL</sequence>
<reference key="1">
    <citation type="journal article" date="2007" name="BMC Biol.">
        <title>A clade uniting the green algae Mesostigma viride and Chlorokybus atmophyticus represents the deepest branch of the Streptophyta in chloroplast genome-based phylogenies.</title>
        <authorList>
            <person name="Lemieux C."/>
            <person name="Otis C."/>
            <person name="Turmel M."/>
        </authorList>
    </citation>
    <scope>NUCLEOTIDE SEQUENCE [LARGE SCALE GENOMIC DNA]</scope>
    <source>
        <strain>SAG 48.80</strain>
    </source>
</reference>
<gene>
    <name evidence="1" type="primary">rpl14</name>
</gene>